<feature type="chain" id="PRO_1000051978" description="DNA-directed RNA polymerase subunit beta">
    <location>
        <begin position="1"/>
        <end position="1372"/>
    </location>
</feature>
<dbReference type="EC" id="2.7.7.6" evidence="1"/>
<dbReference type="EMBL" id="CP000849">
    <property type="protein sequence ID" value="ABV78695.1"/>
    <property type="molecule type" value="Genomic_DNA"/>
</dbReference>
<dbReference type="RefSeq" id="WP_012151623.1">
    <property type="nucleotide sequence ID" value="NC_009883.1"/>
</dbReference>
<dbReference type="SMR" id="A8GV24"/>
<dbReference type="KEGG" id="rbo:A1I_01515"/>
<dbReference type="HOGENOM" id="CLU_000524_4_0_5"/>
<dbReference type="GO" id="GO:0000428">
    <property type="term" value="C:DNA-directed RNA polymerase complex"/>
    <property type="evidence" value="ECO:0007669"/>
    <property type="project" value="UniProtKB-KW"/>
</dbReference>
<dbReference type="GO" id="GO:0003677">
    <property type="term" value="F:DNA binding"/>
    <property type="evidence" value="ECO:0007669"/>
    <property type="project" value="UniProtKB-UniRule"/>
</dbReference>
<dbReference type="GO" id="GO:0003899">
    <property type="term" value="F:DNA-directed RNA polymerase activity"/>
    <property type="evidence" value="ECO:0007669"/>
    <property type="project" value="UniProtKB-UniRule"/>
</dbReference>
<dbReference type="GO" id="GO:0032549">
    <property type="term" value="F:ribonucleoside binding"/>
    <property type="evidence" value="ECO:0007669"/>
    <property type="project" value="InterPro"/>
</dbReference>
<dbReference type="GO" id="GO:0006351">
    <property type="term" value="P:DNA-templated transcription"/>
    <property type="evidence" value="ECO:0007669"/>
    <property type="project" value="UniProtKB-UniRule"/>
</dbReference>
<dbReference type="CDD" id="cd00653">
    <property type="entry name" value="RNA_pol_B_RPB2"/>
    <property type="match status" value="1"/>
</dbReference>
<dbReference type="FunFam" id="3.90.1800.10:FF:000001">
    <property type="entry name" value="DNA-directed RNA polymerase subunit beta"/>
    <property type="match status" value="1"/>
</dbReference>
<dbReference type="Gene3D" id="2.40.50.100">
    <property type="match status" value="1"/>
</dbReference>
<dbReference type="Gene3D" id="2.40.50.150">
    <property type="match status" value="1"/>
</dbReference>
<dbReference type="Gene3D" id="3.90.1100.10">
    <property type="match status" value="2"/>
</dbReference>
<dbReference type="Gene3D" id="2.30.150.10">
    <property type="entry name" value="DNA-directed RNA polymerase, beta subunit, external 1 domain"/>
    <property type="match status" value="1"/>
</dbReference>
<dbReference type="Gene3D" id="2.40.270.10">
    <property type="entry name" value="DNA-directed RNA polymerase, subunit 2, domain 6"/>
    <property type="match status" value="1"/>
</dbReference>
<dbReference type="Gene3D" id="3.90.1800.10">
    <property type="entry name" value="RNA polymerase alpha subunit dimerisation domain"/>
    <property type="match status" value="1"/>
</dbReference>
<dbReference type="HAMAP" id="MF_01321">
    <property type="entry name" value="RNApol_bact_RpoB"/>
    <property type="match status" value="1"/>
</dbReference>
<dbReference type="InterPro" id="IPR042107">
    <property type="entry name" value="DNA-dir_RNA_pol_bsu_ext_1_sf"/>
</dbReference>
<dbReference type="InterPro" id="IPR019462">
    <property type="entry name" value="DNA-dir_RNA_pol_bsu_external_1"/>
</dbReference>
<dbReference type="InterPro" id="IPR015712">
    <property type="entry name" value="DNA-dir_RNA_pol_su2"/>
</dbReference>
<dbReference type="InterPro" id="IPR007120">
    <property type="entry name" value="DNA-dir_RNAP_su2_dom"/>
</dbReference>
<dbReference type="InterPro" id="IPR037033">
    <property type="entry name" value="DNA-dir_RNAP_su2_hyb_sf"/>
</dbReference>
<dbReference type="InterPro" id="IPR010243">
    <property type="entry name" value="RNA_pol_bsu_bac"/>
</dbReference>
<dbReference type="InterPro" id="IPR007121">
    <property type="entry name" value="RNA_pol_bsu_CS"/>
</dbReference>
<dbReference type="InterPro" id="IPR007644">
    <property type="entry name" value="RNA_pol_bsu_protrusion"/>
</dbReference>
<dbReference type="InterPro" id="IPR007642">
    <property type="entry name" value="RNA_pol_Rpb2_2"/>
</dbReference>
<dbReference type="InterPro" id="IPR007645">
    <property type="entry name" value="RNA_pol_Rpb2_3"/>
</dbReference>
<dbReference type="InterPro" id="IPR007641">
    <property type="entry name" value="RNA_pol_Rpb2_7"/>
</dbReference>
<dbReference type="InterPro" id="IPR014724">
    <property type="entry name" value="RNA_pol_RPB2_OB-fold"/>
</dbReference>
<dbReference type="NCBIfam" id="NF001616">
    <property type="entry name" value="PRK00405.1"/>
    <property type="match status" value="1"/>
</dbReference>
<dbReference type="NCBIfam" id="TIGR02013">
    <property type="entry name" value="rpoB"/>
    <property type="match status" value="1"/>
</dbReference>
<dbReference type="PANTHER" id="PTHR20856">
    <property type="entry name" value="DNA-DIRECTED RNA POLYMERASE I SUBUNIT 2"/>
    <property type="match status" value="1"/>
</dbReference>
<dbReference type="Pfam" id="PF04563">
    <property type="entry name" value="RNA_pol_Rpb2_1"/>
    <property type="match status" value="1"/>
</dbReference>
<dbReference type="Pfam" id="PF04561">
    <property type="entry name" value="RNA_pol_Rpb2_2"/>
    <property type="match status" value="2"/>
</dbReference>
<dbReference type="Pfam" id="PF04565">
    <property type="entry name" value="RNA_pol_Rpb2_3"/>
    <property type="match status" value="1"/>
</dbReference>
<dbReference type="Pfam" id="PF10385">
    <property type="entry name" value="RNA_pol_Rpb2_45"/>
    <property type="match status" value="1"/>
</dbReference>
<dbReference type="Pfam" id="PF00562">
    <property type="entry name" value="RNA_pol_Rpb2_6"/>
    <property type="match status" value="1"/>
</dbReference>
<dbReference type="Pfam" id="PF04560">
    <property type="entry name" value="RNA_pol_Rpb2_7"/>
    <property type="match status" value="1"/>
</dbReference>
<dbReference type="SUPFAM" id="SSF64484">
    <property type="entry name" value="beta and beta-prime subunits of DNA dependent RNA-polymerase"/>
    <property type="match status" value="1"/>
</dbReference>
<dbReference type="PROSITE" id="PS01166">
    <property type="entry name" value="RNA_POL_BETA"/>
    <property type="match status" value="1"/>
</dbReference>
<accession>A8GV24</accession>
<sequence length="1372" mass="153832">MVSLRDNIEVQPLSHNKRVRKNFGHINLVADIPNLIEIQKNSYEKNFLQLDTKDSERKNKGLQSILNSIFPISDPSNIANLEFVKYEFDTPKYDVEECTQRSLSYDSALKVTLRLSIWDIDEDTGSREIKGIKEQQVYMGNIPLMTKNGTFIINGTERVVVSQMHRSPGVFFYHDEGKVHSSRKLLYSARVIPYRGSWLDLEFDAKDIIYFRIDRKRKLYATTLLKAIGMSTEEIIKFYYDSVNYKVVKNKGWAVKFMPSHITAHRLTSDLIDADTGNVLLKAGQKITPRLAKKYAGEGLNNILVSHEALIGKYLSEDLKDPESDEILAKIGEMITVELLSVISDLKIKNISVLVINPQSGPYIRNTLFSDKNQDRESALFDIFRVLRPGEPANIEAAESLFYNLFFDPERYDLSEVGRIKMNSRLELNISDETTVLTTDDIKNILRVLVELKDRKGIIDDIDHLGNRRVRSVGELIENQFRIGLVRMEKSVVERMSAGDIDTVMPHDLVNSKILVSVVKEFFSTSQLSQFMDQTNPLSEITHKRRLSALGPGGLSRDRAGFEVRDVHPTHYGRICPIETPEGQNIGLINSMATYARINKHGFIESPYRKVKDGHVTDEVVYLSAIEEGKYKIGQANSKVDKDGILQGEFINCRVEGGNFVMVEPHEVDFIDVTPMQVVSVAASLIPFLENDDANRALMGSNMQRQAVPLIKTDAPFVGTGVEGVVAKDSGASVLALNDGIVEQVDSNRIVIRAIGQKTESAPSVDIYNLLKFQKSNHNTCINQKPLVKVGHYVKKNDIIADGPSTDNGEIALGRNVLVAFLPWNGYNFEDSILISERIVKEDVFTSVHIEEFEVIARDTRLGPEEITRDIPNVSEEALRHLDEVGIIYVGAEVKAGDILVGKVTPKSESPITPEEKLLRAIFGEKAFDVKDSSLHVPSGVSGTVVEVRVFSRRGVEKDQRAIAIEKQQIEKLAKDRDDELEIIEHFVFSWLEKLLVGQVSINGPKTVKTGQTITSEILKGLSKGQLWQFTVEDANVMNEIEQLKGHYDGKKEALNKRFATKVEKLQSGDDLPQGALKVVKVFIATKHKLQPGDKMAGRHGNKGVISRIVPEEDMPFLEDGTVVDIVLNPLGLPSRMNIGQVLETHLGWASVNLAKKIAGLVEEHKTKHASIEKIKKFLIELYGENINHILEKSDEEIISFCNEAAKGVYFATPVFDGAKVEDVKDMLRLAGQDLSGQVKLIDGRTGEYFDRLVTVGQKYLLKLHHLVDNKIHSRSIGPYSLVTQQPLGGKSHFGGQRFGEMECWALQAYGAAYTLQEMLTVKSDDVNGRIKIYDSIVRGENNFESGIPESFNVMIKEFRSLCLNVKLEVTS</sequence>
<protein>
    <recommendedName>
        <fullName evidence="1">DNA-directed RNA polymerase subunit beta</fullName>
        <shortName evidence="1">RNAP subunit beta</shortName>
        <ecNumber evidence="1">2.7.7.6</ecNumber>
    </recommendedName>
    <alternativeName>
        <fullName evidence="1">RNA polymerase subunit beta</fullName>
    </alternativeName>
    <alternativeName>
        <fullName evidence="1">Transcriptase subunit beta</fullName>
    </alternativeName>
</protein>
<evidence type="ECO:0000255" key="1">
    <source>
        <dbReference type="HAMAP-Rule" id="MF_01321"/>
    </source>
</evidence>
<reference key="1">
    <citation type="submission" date="2007-09" db="EMBL/GenBank/DDBJ databases">
        <title>Complete genome sequencing of Rickettsia bellii.</title>
        <authorList>
            <person name="Madan A."/>
            <person name="Lee H."/>
            <person name="Madan A."/>
            <person name="Yoon J.-G."/>
            <person name="Ryu G.-Y."/>
            <person name="Dasch G."/>
            <person name="Ereemeva M."/>
        </authorList>
    </citation>
    <scope>NUCLEOTIDE SEQUENCE [LARGE SCALE GENOMIC DNA]</scope>
    <source>
        <strain>OSU 85-389</strain>
    </source>
</reference>
<organism>
    <name type="scientific">Rickettsia bellii (strain OSU 85-389)</name>
    <dbReference type="NCBI Taxonomy" id="391896"/>
    <lineage>
        <taxon>Bacteria</taxon>
        <taxon>Pseudomonadati</taxon>
        <taxon>Pseudomonadota</taxon>
        <taxon>Alphaproteobacteria</taxon>
        <taxon>Rickettsiales</taxon>
        <taxon>Rickettsiaceae</taxon>
        <taxon>Rickettsieae</taxon>
        <taxon>Rickettsia</taxon>
        <taxon>belli group</taxon>
    </lineage>
</organism>
<keyword id="KW-0240">DNA-directed RNA polymerase</keyword>
<keyword id="KW-0548">Nucleotidyltransferase</keyword>
<keyword id="KW-0804">Transcription</keyword>
<keyword id="KW-0808">Transferase</keyword>
<gene>
    <name evidence="1" type="primary">rpoB</name>
    <name type="ordered locus">A1I_01515</name>
</gene>
<proteinExistence type="inferred from homology"/>
<name>RPOB_RICB8</name>
<comment type="function">
    <text evidence="1">DNA-dependent RNA polymerase catalyzes the transcription of DNA into RNA using the four ribonucleoside triphosphates as substrates.</text>
</comment>
<comment type="catalytic activity">
    <reaction evidence="1">
        <text>RNA(n) + a ribonucleoside 5'-triphosphate = RNA(n+1) + diphosphate</text>
        <dbReference type="Rhea" id="RHEA:21248"/>
        <dbReference type="Rhea" id="RHEA-COMP:14527"/>
        <dbReference type="Rhea" id="RHEA-COMP:17342"/>
        <dbReference type="ChEBI" id="CHEBI:33019"/>
        <dbReference type="ChEBI" id="CHEBI:61557"/>
        <dbReference type="ChEBI" id="CHEBI:140395"/>
        <dbReference type="EC" id="2.7.7.6"/>
    </reaction>
</comment>
<comment type="subunit">
    <text evidence="1">The RNAP catalytic core consists of 2 alpha, 1 beta, 1 beta' and 1 omega subunit. When a sigma factor is associated with the core the holoenzyme is formed, which can initiate transcription.</text>
</comment>
<comment type="similarity">
    <text evidence="1">Belongs to the RNA polymerase beta chain family.</text>
</comment>